<protein>
    <recommendedName>
        <fullName evidence="1">UPF0102 protein DICTH_1420</fullName>
    </recommendedName>
</protein>
<gene>
    <name type="ordered locus">DICTH_1420</name>
</gene>
<sequence>MNNKEIGKLGEDFTIDFLNKRGFIILERNYKVPLGEVDIIAQKGDLLIFIEVKTRRNLDFGIPAEAVDRTKQTRIKKIAELYISTKKPKFKKIRFDIMSIILSKSGKILDWEYLINAF</sequence>
<accession>B5YFD1</accession>
<comment type="similarity">
    <text evidence="1">Belongs to the UPF0102 family.</text>
</comment>
<evidence type="ECO:0000255" key="1">
    <source>
        <dbReference type="HAMAP-Rule" id="MF_00048"/>
    </source>
</evidence>
<feature type="chain" id="PRO_1000200136" description="UPF0102 protein DICTH_1420">
    <location>
        <begin position="1"/>
        <end position="118"/>
    </location>
</feature>
<proteinExistence type="inferred from homology"/>
<dbReference type="EMBL" id="CP001146">
    <property type="protein sequence ID" value="ACI19455.1"/>
    <property type="molecule type" value="Genomic_DNA"/>
</dbReference>
<dbReference type="RefSeq" id="WP_012548087.1">
    <property type="nucleotide sequence ID" value="NC_011297.1"/>
</dbReference>
<dbReference type="SMR" id="B5YFD1"/>
<dbReference type="STRING" id="309799.DICTH_1420"/>
<dbReference type="PaxDb" id="309799-DICTH_1420"/>
<dbReference type="KEGG" id="dth:DICTH_1420"/>
<dbReference type="eggNOG" id="COG0792">
    <property type="taxonomic scope" value="Bacteria"/>
</dbReference>
<dbReference type="HOGENOM" id="CLU_115353_3_1_0"/>
<dbReference type="OrthoDB" id="9802516at2"/>
<dbReference type="Proteomes" id="UP000001733">
    <property type="component" value="Chromosome"/>
</dbReference>
<dbReference type="GO" id="GO:0003676">
    <property type="term" value="F:nucleic acid binding"/>
    <property type="evidence" value="ECO:0007669"/>
    <property type="project" value="InterPro"/>
</dbReference>
<dbReference type="CDD" id="cd20736">
    <property type="entry name" value="PoNe_Nuclease"/>
    <property type="match status" value="1"/>
</dbReference>
<dbReference type="Gene3D" id="3.40.1350.10">
    <property type="match status" value="1"/>
</dbReference>
<dbReference type="HAMAP" id="MF_00048">
    <property type="entry name" value="UPF0102"/>
    <property type="match status" value="1"/>
</dbReference>
<dbReference type="InterPro" id="IPR011335">
    <property type="entry name" value="Restrct_endonuc-II-like"/>
</dbReference>
<dbReference type="InterPro" id="IPR011856">
    <property type="entry name" value="tRNA_endonuc-like_dom_sf"/>
</dbReference>
<dbReference type="InterPro" id="IPR003509">
    <property type="entry name" value="UPF0102_YraN-like"/>
</dbReference>
<dbReference type="NCBIfam" id="NF009150">
    <property type="entry name" value="PRK12497.1-3"/>
    <property type="match status" value="1"/>
</dbReference>
<dbReference type="NCBIfam" id="NF009154">
    <property type="entry name" value="PRK12497.3-3"/>
    <property type="match status" value="1"/>
</dbReference>
<dbReference type="NCBIfam" id="TIGR00252">
    <property type="entry name" value="YraN family protein"/>
    <property type="match status" value="1"/>
</dbReference>
<dbReference type="PANTHER" id="PTHR34039">
    <property type="entry name" value="UPF0102 PROTEIN YRAN"/>
    <property type="match status" value="1"/>
</dbReference>
<dbReference type="PANTHER" id="PTHR34039:SF1">
    <property type="entry name" value="UPF0102 PROTEIN YRAN"/>
    <property type="match status" value="1"/>
</dbReference>
<dbReference type="Pfam" id="PF02021">
    <property type="entry name" value="UPF0102"/>
    <property type="match status" value="1"/>
</dbReference>
<dbReference type="SUPFAM" id="SSF52980">
    <property type="entry name" value="Restriction endonuclease-like"/>
    <property type="match status" value="1"/>
</dbReference>
<organism>
    <name type="scientific">Dictyoglomus thermophilum (strain ATCC 35947 / DSM 3960 / H-6-12)</name>
    <dbReference type="NCBI Taxonomy" id="309799"/>
    <lineage>
        <taxon>Bacteria</taxon>
        <taxon>Pseudomonadati</taxon>
        <taxon>Dictyoglomota</taxon>
        <taxon>Dictyoglomia</taxon>
        <taxon>Dictyoglomales</taxon>
        <taxon>Dictyoglomaceae</taxon>
        <taxon>Dictyoglomus</taxon>
    </lineage>
</organism>
<reference key="1">
    <citation type="journal article" date="2014" name="Genome Announc.">
        <title>Complete Genome Sequence of the Extreme Thermophile Dictyoglomus thermophilum H-6-12.</title>
        <authorList>
            <person name="Coil D.A."/>
            <person name="Badger J.H."/>
            <person name="Forberger H.C."/>
            <person name="Riggs F."/>
            <person name="Madupu R."/>
            <person name="Fedorova N."/>
            <person name="Ward N."/>
            <person name="Robb F.T."/>
            <person name="Eisen J.A."/>
        </authorList>
    </citation>
    <scope>NUCLEOTIDE SEQUENCE [LARGE SCALE GENOMIC DNA]</scope>
    <source>
        <strain>ATCC 35947 / DSM 3960 / H-6-12</strain>
    </source>
</reference>
<name>Y1420_DICT6</name>